<comment type="function">
    <text evidence="2">Virulence-associated protein essential for survival of the bacterium within the tick host and therefore within the natural life cycle of the Lyme disease spirochete.</text>
</comment>
<comment type="subcellular location">
    <subcellularLocation>
        <location evidence="3">Cell outer membrane</location>
    </subcellularLocation>
</comment>
<comment type="similarity">
    <text evidence="3">Belongs to the BptA family.</text>
</comment>
<evidence type="ECO:0000255" key="1"/>
<evidence type="ECO:0000269" key="2">
    <source>
    </source>
</evidence>
<evidence type="ECO:0000305" key="3"/>
<accession>E4QH55</accession>
<accession>O50712</accession>
<accession>Q56NH3</accession>
<accession>Q56NH4</accession>
<geneLocation type="plasmid">
    <name>lp25</name>
</geneLocation>
<geneLocation type="plasmid">
    <name>N40_lp25</name>
</geneLocation>
<reference key="1">
    <citation type="journal article" date="2005" name="Proc. Natl. Acad. Sci. U.S.A.">
        <title>bptA (bbe16) is essential for the persistence of the Lyme disease spirochete, Borrelia burgdorferi, in its natural tick vector.</title>
        <authorList>
            <person name="Revel A.T."/>
            <person name="Blevins J.S."/>
            <person name="Almazan C."/>
            <person name="Neil L."/>
            <person name="Kocan K.M."/>
            <person name="de la Fuente J."/>
            <person name="Hagman K.E."/>
            <person name="Norgard M.V."/>
        </authorList>
    </citation>
    <scope>NUCLEOTIDE SEQUENCE [GENOMIC DNA]</scope>
    <scope>FUNCTION</scope>
    <source>
        <strain>N40</strain>
        <plasmid>lp25</plasmid>
    </source>
</reference>
<reference key="2">
    <citation type="journal article" date="2011" name="J. Bacteriol.">
        <title>Whole-genome sequences of thirteen isolates of Borrelia burgdorferi.</title>
        <authorList>
            <person name="Schutzer S.E."/>
            <person name="Fraser-Liggett C.M."/>
            <person name="Casjens S.R."/>
            <person name="Qiu W.G."/>
            <person name="Dunn J.J."/>
            <person name="Mongodin E.F."/>
            <person name="Luft B.J."/>
        </authorList>
    </citation>
    <scope>NUCLEOTIDE SEQUENCE [LARGE SCALE GENOMIC DNA]</scope>
    <source>
        <strain>N40</strain>
        <plasmid>N40_lp25</plasmid>
    </source>
</reference>
<proteinExistence type="inferred from homology"/>
<protein>
    <recommendedName>
        <fullName>Protein BptA</fullName>
    </recommendedName>
    <alternativeName>
        <fullName>Borrelial persistence in ticks protein A</fullName>
    </alternativeName>
</protein>
<sequence length="206" mass="24659">MREILFFGLLSICIFLVFFFYKQKENNIIYNRIVEKFEDNVVIDEIYTHLFKDSNLKELVFIKSQLIIPELEHKKMIKATGYRADAYKALSTVYRFDFKVHDNKILGFKSVIFEGFEDAKVSKHENNLPSEKWQQLKDFNIGDPNINEKFFHLEFPFVVKNTLCVTISKGFFKKIKKLKRLKIMLISNEDREYKIDIENFLPKYNL</sequence>
<dbReference type="EMBL" id="AY894345">
    <property type="protein sequence ID" value="AAX69072.1"/>
    <property type="molecule type" value="Genomic_DNA"/>
</dbReference>
<dbReference type="EMBL" id="CP002234">
    <property type="protein sequence ID" value="ADQ29948.1"/>
    <property type="molecule type" value="Genomic_DNA"/>
</dbReference>
<dbReference type="RefSeq" id="WP_010259717.1">
    <property type="nucleotide sequence ID" value="NC_017420.1"/>
</dbReference>
<dbReference type="KEGG" id="bbn:BbuN40_E05"/>
<dbReference type="PATRIC" id="fig|521007.3.peg.1035"/>
<dbReference type="HOGENOM" id="CLU_1329815_0_0_12"/>
<dbReference type="GO" id="GO:0009279">
    <property type="term" value="C:cell outer membrane"/>
    <property type="evidence" value="ECO:0007669"/>
    <property type="project" value="UniProtKB-SubCell"/>
</dbReference>
<dbReference type="InterPro" id="IPR031471">
    <property type="entry name" value="BptA"/>
</dbReference>
<dbReference type="NCBIfam" id="NF045772">
    <property type="entry name" value="VirAssocBptA"/>
    <property type="match status" value="1"/>
</dbReference>
<dbReference type="Pfam" id="PF17044">
    <property type="entry name" value="BPTA"/>
    <property type="match status" value="1"/>
</dbReference>
<organism>
    <name type="scientific">Borreliella burgdorferi (strain N40)</name>
    <name type="common">Borrelia burgdorferi</name>
    <dbReference type="NCBI Taxonomy" id="521007"/>
    <lineage>
        <taxon>Bacteria</taxon>
        <taxon>Pseudomonadati</taxon>
        <taxon>Spirochaetota</taxon>
        <taxon>Spirochaetia</taxon>
        <taxon>Spirochaetales</taxon>
        <taxon>Borreliaceae</taxon>
        <taxon>Borreliella</taxon>
    </lineage>
</organism>
<gene>
    <name type="primary">bptA</name>
    <name type="ordered locus">BbuN40_E05</name>
</gene>
<keyword id="KW-0998">Cell outer membrane</keyword>
<keyword id="KW-0472">Membrane</keyword>
<keyword id="KW-0614">Plasmid</keyword>
<keyword id="KW-0732">Signal</keyword>
<keyword id="KW-0843">Virulence</keyword>
<name>BPTA_BORBN</name>
<feature type="signal peptide" evidence="1">
    <location>
        <begin position="1"/>
        <end position="19"/>
    </location>
</feature>
<feature type="chain" id="PRO_0000406310" description="Protein BptA">
    <location>
        <begin position="20"/>
        <end position="206"/>
    </location>
</feature>
<feature type="sequence conflict" description="In Ref. 1; AAX69072." evidence="3" ref="1">
    <original>RE</original>
    <variation>GK</variation>
    <location>
        <begin position="2"/>
        <end position="3"/>
    </location>
</feature>
<feature type="sequence conflict" description="In Ref. 1; AAX69072." evidence="3" ref="1">
    <original>S</original>
    <variation>L</variation>
    <location>
        <position position="11"/>
    </location>
</feature>
<feature type="sequence conflict" description="In Ref. 1; AAX69072." evidence="3" ref="1">
    <original>V</original>
    <variation>G</variation>
    <location>
        <position position="17"/>
    </location>
</feature>
<feature type="sequence conflict" description="In Ref. 1; AAX69072." evidence="3" ref="1">
    <original>VI</original>
    <variation>LV</variation>
    <location>
        <begin position="42"/>
        <end position="43"/>
    </location>
</feature>